<sequence length="118" mass="12711">MAEQVTSAQATAKTVRIAARKVRLVIDLIRGKSVAEALAILQFTPRGASPVVAKVLNSAVANAENNFDLDRQDLVVSEAYVNEGPTLKRFRPRAKGSASPINKRTSHITVVVSEKEEG</sequence>
<comment type="function">
    <text evidence="1">This protein binds specifically to 23S rRNA; its binding is stimulated by other ribosomal proteins, e.g. L4, L17, and L20. It is important during the early stages of 50S assembly. It makes multiple contacts with different domains of the 23S rRNA in the assembled 50S subunit and ribosome (By similarity).</text>
</comment>
<comment type="function">
    <text evidence="1">The globular domain of the protein is located near the polypeptide exit tunnel on the outside of the subunit, while an extended beta-hairpin is found that lines the wall of the exit tunnel in the center of the 70S ribosome.</text>
</comment>
<comment type="subunit">
    <text evidence="1">Part of the 50S ribosomal subunit.</text>
</comment>
<comment type="similarity">
    <text evidence="1">Belongs to the universal ribosomal protein uL22 family.</text>
</comment>
<name>RL22_LEVBA</name>
<dbReference type="EMBL" id="CP000416">
    <property type="protein sequence ID" value="ABJ64760.1"/>
    <property type="molecule type" value="Genomic_DNA"/>
</dbReference>
<dbReference type="RefSeq" id="WP_011668494.1">
    <property type="nucleotide sequence ID" value="NC_008497.1"/>
</dbReference>
<dbReference type="SMR" id="Q03PW2"/>
<dbReference type="STRING" id="387344.LVIS_1685"/>
<dbReference type="GeneID" id="56993546"/>
<dbReference type="KEGG" id="lbr:LVIS_1685"/>
<dbReference type="eggNOG" id="COG0091">
    <property type="taxonomic scope" value="Bacteria"/>
</dbReference>
<dbReference type="HOGENOM" id="CLU_083987_3_3_9"/>
<dbReference type="Proteomes" id="UP000001652">
    <property type="component" value="Chromosome"/>
</dbReference>
<dbReference type="GO" id="GO:0022625">
    <property type="term" value="C:cytosolic large ribosomal subunit"/>
    <property type="evidence" value="ECO:0007669"/>
    <property type="project" value="TreeGrafter"/>
</dbReference>
<dbReference type="GO" id="GO:0019843">
    <property type="term" value="F:rRNA binding"/>
    <property type="evidence" value="ECO:0007669"/>
    <property type="project" value="UniProtKB-UniRule"/>
</dbReference>
<dbReference type="GO" id="GO:0003735">
    <property type="term" value="F:structural constituent of ribosome"/>
    <property type="evidence" value="ECO:0007669"/>
    <property type="project" value="InterPro"/>
</dbReference>
<dbReference type="GO" id="GO:0006412">
    <property type="term" value="P:translation"/>
    <property type="evidence" value="ECO:0007669"/>
    <property type="project" value="UniProtKB-UniRule"/>
</dbReference>
<dbReference type="CDD" id="cd00336">
    <property type="entry name" value="Ribosomal_L22"/>
    <property type="match status" value="1"/>
</dbReference>
<dbReference type="FunFam" id="3.90.470.10:FF:000001">
    <property type="entry name" value="50S ribosomal protein L22"/>
    <property type="match status" value="1"/>
</dbReference>
<dbReference type="Gene3D" id="3.90.470.10">
    <property type="entry name" value="Ribosomal protein L22/L17"/>
    <property type="match status" value="1"/>
</dbReference>
<dbReference type="HAMAP" id="MF_01331_B">
    <property type="entry name" value="Ribosomal_uL22_B"/>
    <property type="match status" value="1"/>
</dbReference>
<dbReference type="InterPro" id="IPR001063">
    <property type="entry name" value="Ribosomal_uL22"/>
</dbReference>
<dbReference type="InterPro" id="IPR005727">
    <property type="entry name" value="Ribosomal_uL22_bac/chlpt-type"/>
</dbReference>
<dbReference type="InterPro" id="IPR047867">
    <property type="entry name" value="Ribosomal_uL22_bac/org-type"/>
</dbReference>
<dbReference type="InterPro" id="IPR018260">
    <property type="entry name" value="Ribosomal_uL22_CS"/>
</dbReference>
<dbReference type="InterPro" id="IPR036394">
    <property type="entry name" value="Ribosomal_uL22_sf"/>
</dbReference>
<dbReference type="NCBIfam" id="TIGR01044">
    <property type="entry name" value="rplV_bact"/>
    <property type="match status" value="1"/>
</dbReference>
<dbReference type="PANTHER" id="PTHR13501">
    <property type="entry name" value="CHLOROPLAST 50S RIBOSOMAL PROTEIN L22-RELATED"/>
    <property type="match status" value="1"/>
</dbReference>
<dbReference type="PANTHER" id="PTHR13501:SF8">
    <property type="entry name" value="LARGE RIBOSOMAL SUBUNIT PROTEIN UL22M"/>
    <property type="match status" value="1"/>
</dbReference>
<dbReference type="Pfam" id="PF00237">
    <property type="entry name" value="Ribosomal_L22"/>
    <property type="match status" value="1"/>
</dbReference>
<dbReference type="SUPFAM" id="SSF54843">
    <property type="entry name" value="Ribosomal protein L22"/>
    <property type="match status" value="1"/>
</dbReference>
<dbReference type="PROSITE" id="PS00464">
    <property type="entry name" value="RIBOSOMAL_L22"/>
    <property type="match status" value="1"/>
</dbReference>
<protein>
    <recommendedName>
        <fullName evidence="1">Large ribosomal subunit protein uL22</fullName>
    </recommendedName>
    <alternativeName>
        <fullName evidence="2">50S ribosomal protein L22</fullName>
    </alternativeName>
</protein>
<accession>Q03PW2</accession>
<proteinExistence type="inferred from homology"/>
<keyword id="KW-1185">Reference proteome</keyword>
<keyword id="KW-0687">Ribonucleoprotein</keyword>
<keyword id="KW-0689">Ribosomal protein</keyword>
<keyword id="KW-0694">RNA-binding</keyword>
<keyword id="KW-0699">rRNA-binding</keyword>
<feature type="chain" id="PRO_1000052588" description="Large ribosomal subunit protein uL22">
    <location>
        <begin position="1"/>
        <end position="118"/>
    </location>
</feature>
<organism>
    <name type="scientific">Levilactobacillus brevis (strain ATCC 367 / BCRC 12310 / CIP 105137 / JCM 1170 / LMG 11437 / NCIMB 947 / NCTC 947)</name>
    <name type="common">Lactobacillus brevis</name>
    <dbReference type="NCBI Taxonomy" id="387344"/>
    <lineage>
        <taxon>Bacteria</taxon>
        <taxon>Bacillati</taxon>
        <taxon>Bacillota</taxon>
        <taxon>Bacilli</taxon>
        <taxon>Lactobacillales</taxon>
        <taxon>Lactobacillaceae</taxon>
        <taxon>Levilactobacillus</taxon>
    </lineage>
</organism>
<gene>
    <name evidence="1" type="primary">rplV</name>
    <name type="ordered locus">LVIS_1685</name>
</gene>
<reference key="1">
    <citation type="journal article" date="2006" name="Proc. Natl. Acad. Sci. U.S.A.">
        <title>Comparative genomics of the lactic acid bacteria.</title>
        <authorList>
            <person name="Makarova K.S."/>
            <person name="Slesarev A."/>
            <person name="Wolf Y.I."/>
            <person name="Sorokin A."/>
            <person name="Mirkin B."/>
            <person name="Koonin E.V."/>
            <person name="Pavlov A."/>
            <person name="Pavlova N."/>
            <person name="Karamychev V."/>
            <person name="Polouchine N."/>
            <person name="Shakhova V."/>
            <person name="Grigoriev I."/>
            <person name="Lou Y."/>
            <person name="Rohksar D."/>
            <person name="Lucas S."/>
            <person name="Huang K."/>
            <person name="Goodstein D.M."/>
            <person name="Hawkins T."/>
            <person name="Plengvidhya V."/>
            <person name="Welker D."/>
            <person name="Hughes J."/>
            <person name="Goh Y."/>
            <person name="Benson A."/>
            <person name="Baldwin K."/>
            <person name="Lee J.-H."/>
            <person name="Diaz-Muniz I."/>
            <person name="Dosti B."/>
            <person name="Smeianov V."/>
            <person name="Wechter W."/>
            <person name="Barabote R."/>
            <person name="Lorca G."/>
            <person name="Altermann E."/>
            <person name="Barrangou R."/>
            <person name="Ganesan B."/>
            <person name="Xie Y."/>
            <person name="Rawsthorne H."/>
            <person name="Tamir D."/>
            <person name="Parker C."/>
            <person name="Breidt F."/>
            <person name="Broadbent J.R."/>
            <person name="Hutkins R."/>
            <person name="O'Sullivan D."/>
            <person name="Steele J."/>
            <person name="Unlu G."/>
            <person name="Saier M.H. Jr."/>
            <person name="Klaenhammer T."/>
            <person name="Richardson P."/>
            <person name="Kozyavkin S."/>
            <person name="Weimer B.C."/>
            <person name="Mills D.A."/>
        </authorList>
    </citation>
    <scope>NUCLEOTIDE SEQUENCE [LARGE SCALE GENOMIC DNA]</scope>
    <source>
        <strain>ATCC 367 / BCRC 12310 / CIP 105137 / JCM 1170 / LMG 11437 / NCIMB 947 / NCTC 947</strain>
    </source>
</reference>
<evidence type="ECO:0000255" key="1">
    <source>
        <dbReference type="HAMAP-Rule" id="MF_01331"/>
    </source>
</evidence>
<evidence type="ECO:0000305" key="2"/>